<name>ASNS1_PEA</name>
<accession>P19251</accession>
<accession>O49925</accession>
<keyword id="KW-0028">Amino-acid biosynthesis</keyword>
<keyword id="KW-0061">Asparagine biosynthesis</keyword>
<keyword id="KW-0067">ATP-binding</keyword>
<keyword id="KW-0315">Glutamine amidotransferase</keyword>
<keyword id="KW-0436">Ligase</keyword>
<keyword id="KW-0547">Nucleotide-binding</keyword>
<comment type="catalytic activity">
    <reaction>
        <text>L-aspartate + L-glutamine + ATP + H2O = L-asparagine + L-glutamate + AMP + diphosphate + H(+)</text>
        <dbReference type="Rhea" id="RHEA:12228"/>
        <dbReference type="ChEBI" id="CHEBI:15377"/>
        <dbReference type="ChEBI" id="CHEBI:15378"/>
        <dbReference type="ChEBI" id="CHEBI:29985"/>
        <dbReference type="ChEBI" id="CHEBI:29991"/>
        <dbReference type="ChEBI" id="CHEBI:30616"/>
        <dbReference type="ChEBI" id="CHEBI:33019"/>
        <dbReference type="ChEBI" id="CHEBI:58048"/>
        <dbReference type="ChEBI" id="CHEBI:58359"/>
        <dbReference type="ChEBI" id="CHEBI:456215"/>
        <dbReference type="EC" id="6.3.5.4"/>
    </reaction>
</comment>
<comment type="pathway">
    <text>Amino-acid biosynthesis; L-asparagine biosynthesis; L-asparagine from L-aspartate (L-Gln route): step 1/1.</text>
</comment>
<comment type="tissue specificity">
    <text>Root nodules.</text>
</comment>
<comment type="induction">
    <text>By darkness.</text>
</comment>
<feature type="initiator methionine" description="Removed" evidence="1">
    <location>
        <position position="1"/>
    </location>
</feature>
<feature type="chain" id="PRO_0000056926" description="Asparagine synthetase, nodule [glutamine-hydrolyzing]">
    <location>
        <begin position="2"/>
        <end position="586"/>
    </location>
</feature>
<feature type="domain" description="Glutamine amidotransferase type-2" evidence="2">
    <location>
        <begin position="2"/>
        <end position="185"/>
    </location>
</feature>
<feature type="domain" description="Asparagine synthetase">
    <location>
        <begin position="193"/>
        <end position="517"/>
    </location>
</feature>
<feature type="active site" description="For GATase activity" evidence="1">
    <location>
        <position position="2"/>
    </location>
</feature>
<feature type="binding site" evidence="1">
    <location>
        <begin position="50"/>
        <end position="54"/>
    </location>
    <ligand>
        <name>L-glutamine</name>
        <dbReference type="ChEBI" id="CHEBI:58359"/>
    </ligand>
</feature>
<feature type="binding site" evidence="1">
    <location>
        <begin position="75"/>
        <end position="77"/>
    </location>
    <ligand>
        <name>L-glutamine</name>
        <dbReference type="ChEBI" id="CHEBI:58359"/>
    </ligand>
</feature>
<feature type="binding site" evidence="1">
    <location>
        <position position="98"/>
    </location>
    <ligand>
        <name>L-glutamine</name>
        <dbReference type="ChEBI" id="CHEBI:58359"/>
    </ligand>
</feature>
<feature type="binding site" evidence="1">
    <location>
        <position position="232"/>
    </location>
    <ligand>
        <name>ATP</name>
        <dbReference type="ChEBI" id="CHEBI:30616"/>
    </ligand>
</feature>
<feature type="binding site" evidence="1">
    <location>
        <position position="268"/>
    </location>
    <ligand>
        <name>ATP</name>
        <dbReference type="ChEBI" id="CHEBI:30616"/>
    </ligand>
</feature>
<feature type="binding site" evidence="1">
    <location>
        <begin position="342"/>
        <end position="343"/>
    </location>
    <ligand>
        <name>ATP</name>
        <dbReference type="ChEBI" id="CHEBI:30616"/>
    </ligand>
</feature>
<feature type="site" description="Important for beta-aspartyl-AMP intermediate formation" evidence="1">
    <location>
        <position position="344"/>
    </location>
</feature>
<dbReference type="EC" id="6.3.5.4"/>
<dbReference type="EMBL" id="X52179">
    <property type="protein sequence ID" value="CAA36429.1"/>
    <property type="molecule type" value="mRNA"/>
</dbReference>
<dbReference type="EMBL" id="Y13321">
    <property type="protein sequence ID" value="CAA73762.1"/>
    <property type="molecule type" value="Genomic_DNA"/>
</dbReference>
<dbReference type="PIR" id="S11444">
    <property type="entry name" value="AJPMN1"/>
</dbReference>
<dbReference type="SMR" id="P19251"/>
<dbReference type="UniPathway" id="UPA00134">
    <property type="reaction ID" value="UER00195"/>
</dbReference>
<dbReference type="GO" id="GO:0005829">
    <property type="term" value="C:cytosol"/>
    <property type="evidence" value="ECO:0007669"/>
    <property type="project" value="TreeGrafter"/>
</dbReference>
<dbReference type="GO" id="GO:0004066">
    <property type="term" value="F:asparagine synthase (glutamine-hydrolyzing) activity"/>
    <property type="evidence" value="ECO:0007669"/>
    <property type="project" value="UniProtKB-EC"/>
</dbReference>
<dbReference type="GO" id="GO:0005524">
    <property type="term" value="F:ATP binding"/>
    <property type="evidence" value="ECO:0007669"/>
    <property type="project" value="UniProtKB-KW"/>
</dbReference>
<dbReference type="GO" id="GO:0070981">
    <property type="term" value="P:L-asparagine biosynthetic process"/>
    <property type="evidence" value="ECO:0007669"/>
    <property type="project" value="UniProtKB-UniPathway"/>
</dbReference>
<dbReference type="CDD" id="cd01991">
    <property type="entry name" value="Asn_synthase_B_C"/>
    <property type="match status" value="1"/>
</dbReference>
<dbReference type="CDD" id="cd00712">
    <property type="entry name" value="AsnB"/>
    <property type="match status" value="1"/>
</dbReference>
<dbReference type="FunFam" id="3.40.50.620:FF:000055">
    <property type="entry name" value="Asparagine synthetase [glutamine-hydrolyzing]"/>
    <property type="match status" value="1"/>
</dbReference>
<dbReference type="FunFam" id="3.60.20.10:FF:000024">
    <property type="entry name" value="Asparagine synthetase [glutamine-hydrolyzing]"/>
    <property type="match status" value="1"/>
</dbReference>
<dbReference type="Gene3D" id="3.60.20.10">
    <property type="entry name" value="Glutamine Phosphoribosylpyrophosphate, subunit 1, domain 1"/>
    <property type="match status" value="1"/>
</dbReference>
<dbReference type="Gene3D" id="3.40.50.620">
    <property type="entry name" value="HUPs"/>
    <property type="match status" value="1"/>
</dbReference>
<dbReference type="InterPro" id="IPR006426">
    <property type="entry name" value="Asn_synth_AEB"/>
</dbReference>
<dbReference type="InterPro" id="IPR001962">
    <property type="entry name" value="Asn_synthase"/>
</dbReference>
<dbReference type="InterPro" id="IPR050795">
    <property type="entry name" value="Asn_Synthetase"/>
</dbReference>
<dbReference type="InterPro" id="IPR033738">
    <property type="entry name" value="AsnB_N"/>
</dbReference>
<dbReference type="InterPro" id="IPR017932">
    <property type="entry name" value="GATase_2_dom"/>
</dbReference>
<dbReference type="InterPro" id="IPR029055">
    <property type="entry name" value="Ntn_hydrolases_N"/>
</dbReference>
<dbReference type="InterPro" id="IPR014729">
    <property type="entry name" value="Rossmann-like_a/b/a_fold"/>
</dbReference>
<dbReference type="NCBIfam" id="NF006949">
    <property type="entry name" value="PRK09431.1"/>
    <property type="match status" value="1"/>
</dbReference>
<dbReference type="PANTHER" id="PTHR11772">
    <property type="entry name" value="ASPARAGINE SYNTHETASE"/>
    <property type="match status" value="1"/>
</dbReference>
<dbReference type="PANTHER" id="PTHR11772:SF48">
    <property type="entry name" value="ASPARAGINE SYNTHETASE [GLUTAMINE-HYDROLYZING] 1"/>
    <property type="match status" value="1"/>
</dbReference>
<dbReference type="Pfam" id="PF00733">
    <property type="entry name" value="Asn_synthase"/>
    <property type="match status" value="1"/>
</dbReference>
<dbReference type="Pfam" id="PF13537">
    <property type="entry name" value="GATase_7"/>
    <property type="match status" value="1"/>
</dbReference>
<dbReference type="PIRSF" id="PIRSF001589">
    <property type="entry name" value="Asn_synthetase_glu-h"/>
    <property type="match status" value="1"/>
</dbReference>
<dbReference type="SUPFAM" id="SSF52402">
    <property type="entry name" value="Adenine nucleotide alpha hydrolases-like"/>
    <property type="match status" value="1"/>
</dbReference>
<dbReference type="SUPFAM" id="SSF56235">
    <property type="entry name" value="N-terminal nucleophile aminohydrolases (Ntn hydrolases)"/>
    <property type="match status" value="1"/>
</dbReference>
<dbReference type="PROSITE" id="PS51278">
    <property type="entry name" value="GATASE_TYPE_2"/>
    <property type="match status" value="1"/>
</dbReference>
<gene>
    <name type="primary">AS1</name>
</gene>
<protein>
    <recommendedName>
        <fullName>Asparagine synthetase, nodule [glutamine-hydrolyzing]</fullName>
        <ecNumber>6.3.5.4</ecNumber>
    </recommendedName>
    <alternativeName>
        <fullName>Glutamine-dependent asparagine synthetase</fullName>
    </alternativeName>
</protein>
<reference key="1">
    <citation type="journal article" date="1990" name="EMBO J.">
        <title>Dark-induced and organ-specific expression of two asparagine synthetase genes in Pisum sativum.</title>
        <authorList>
            <person name="Tsai F.Y."/>
            <person name="Coruzzi G.M."/>
        </authorList>
    </citation>
    <scope>NUCLEOTIDE SEQUENCE [MRNA]</scope>
    <source>
        <strain>cv. Sparkle</strain>
        <tissue>Root nodule</tissue>
    </source>
</reference>
<reference key="2">
    <citation type="journal article" date="1997" name="Plant J.">
        <title>Light-induced transcriptional repression of the pea AS1 gene: identification of cis-elements and transfactors.</title>
        <authorList>
            <person name="Ngai N."/>
            <person name="Tsai F.Y."/>
            <person name="Coruzzi G.M."/>
        </authorList>
    </citation>
    <scope>NUCLEOTIDE SEQUENCE OF 1-84</scope>
    <source>
        <strain>cv. Feltham First</strain>
    </source>
</reference>
<organism>
    <name type="scientific">Pisum sativum</name>
    <name type="common">Garden pea</name>
    <name type="synonym">Lathyrus oleraceus</name>
    <dbReference type="NCBI Taxonomy" id="3888"/>
    <lineage>
        <taxon>Eukaryota</taxon>
        <taxon>Viridiplantae</taxon>
        <taxon>Streptophyta</taxon>
        <taxon>Embryophyta</taxon>
        <taxon>Tracheophyta</taxon>
        <taxon>Spermatophyta</taxon>
        <taxon>Magnoliopsida</taxon>
        <taxon>eudicotyledons</taxon>
        <taxon>Gunneridae</taxon>
        <taxon>Pentapetalae</taxon>
        <taxon>rosids</taxon>
        <taxon>fabids</taxon>
        <taxon>Fabales</taxon>
        <taxon>Fabaceae</taxon>
        <taxon>Papilionoideae</taxon>
        <taxon>50 kb inversion clade</taxon>
        <taxon>NPAAA clade</taxon>
        <taxon>Hologalegina</taxon>
        <taxon>IRL clade</taxon>
        <taxon>Fabeae</taxon>
        <taxon>Pisum</taxon>
    </lineage>
</organism>
<evidence type="ECO:0000250" key="1"/>
<evidence type="ECO:0000255" key="2">
    <source>
        <dbReference type="PROSITE-ProRule" id="PRU00609"/>
    </source>
</evidence>
<sequence>MCGILAVLGCSDDSQAKRVRILELSRRLKHRGPDWSGLHQHGDNYLAHQRLAIVDPASGDQPLFNEDKSIIVTVNGEIYNHEELRKQLPNHKFFTQCDCDVIAHLYEEHGENFVDMLDGIFSFVLLDTRDNSFIVARDAIGVTSLYIGWGLDGSVWIASELKGLNDECEHFEVFPPGHLYSSKEREFRRWYNPPWFNEAIIPSTPYDPLVLRNAFEKAVIKRLMTDVPFGVLLSGGLDSSLVASVTARYLAGTKAAKQWGAKLPSFCVGLKGAPDLKAGKEVADFLGTVHHEFEFTIQDGIDAIEDVIYHTETYDVTTIRAATPMFLMSRKIKSSGVKWVISGEGSDEIFGGYLYFHKAPNREEFHQETCRKIKALHRYDCLRANKSTYAWGLEARVPFLDKDFIKVAMDIDPEFKMIKHDEGRIEKWILRKAFDDEENPYLPKHILYRQKEQFSDGVGYGWIDGIKDHAAKHVTDRMMFNASHIFPFNTPNTKEAYYYRMIFERFFPQNSARLTVPGGPSVACSTEKAIEWDASWSNNLDPSGRAALGVHVSAYEHQINPVTKGVEPEKIIPKIGVSPLGVAIQT</sequence>
<proteinExistence type="evidence at transcript level"/>